<proteinExistence type="inferred from homology"/>
<sequence length="338" mass="35982">MKRMIALDGAQGEGGGQILRSALSLSMITGQPFTITSIRAGRAKPGLLRQHLTAVKAAAEICRATVEGAELGSQRLVFRLGTVRGGEYRFAIGSAGSCTLVLQTVLPALWFADGPSRVEVSGGTDNPSAPPADFIRRVLEPLLAKIGIHQQTTLLRHGFYPAGGGVVATEVSPVASFNTLQLGERGNIVQMRGEVLLAGVPRHVAEREIATLAGSFSLHEQNIHNLPRDQGPGNTVSLEVESENITERFFVVGEKRVSAEVVAAQLVKEVKRYLASPAVVGEYLADQLVLPMALAGAGEFTVAHPSCHLLTNIAVVERFLPVRFGLIETDGVTRVSIE</sequence>
<name>RTCA_SHISS</name>
<dbReference type="EC" id="6.5.1.4" evidence="1"/>
<dbReference type="EMBL" id="CP000038">
    <property type="protein sequence ID" value="AAZ90106.1"/>
    <property type="status" value="ALT_INIT"/>
    <property type="molecule type" value="Genomic_DNA"/>
</dbReference>
<dbReference type="RefSeq" id="WP_005140388.1">
    <property type="nucleotide sequence ID" value="NC_007384.1"/>
</dbReference>
<dbReference type="SMR" id="Q3YWK6"/>
<dbReference type="GeneID" id="93778577"/>
<dbReference type="KEGG" id="ssn:SSON_3551"/>
<dbReference type="HOGENOM" id="CLU_027882_0_0_6"/>
<dbReference type="Proteomes" id="UP000002529">
    <property type="component" value="Chromosome"/>
</dbReference>
<dbReference type="GO" id="GO:0005737">
    <property type="term" value="C:cytoplasm"/>
    <property type="evidence" value="ECO:0007669"/>
    <property type="project" value="UniProtKB-SubCell"/>
</dbReference>
<dbReference type="GO" id="GO:0005524">
    <property type="term" value="F:ATP binding"/>
    <property type="evidence" value="ECO:0007669"/>
    <property type="project" value="UniProtKB-KW"/>
</dbReference>
<dbReference type="GO" id="GO:0003963">
    <property type="term" value="F:RNA-3'-phosphate cyclase activity"/>
    <property type="evidence" value="ECO:0007669"/>
    <property type="project" value="UniProtKB-UniRule"/>
</dbReference>
<dbReference type="GO" id="GO:0006396">
    <property type="term" value="P:RNA processing"/>
    <property type="evidence" value="ECO:0007669"/>
    <property type="project" value="InterPro"/>
</dbReference>
<dbReference type="FunFam" id="3.65.10.20:FF:000002">
    <property type="entry name" value="GM19193"/>
    <property type="match status" value="1"/>
</dbReference>
<dbReference type="FunFam" id="3.30.360.20:FF:000003">
    <property type="entry name" value="RNA 3'-terminal phosphate cyclase"/>
    <property type="match status" value="1"/>
</dbReference>
<dbReference type="Gene3D" id="3.65.10.20">
    <property type="entry name" value="RNA 3'-terminal phosphate cyclase domain"/>
    <property type="match status" value="1"/>
</dbReference>
<dbReference type="Gene3D" id="3.30.360.20">
    <property type="entry name" value="RNA 3'-terminal phosphate cyclase, insert domain"/>
    <property type="match status" value="1"/>
</dbReference>
<dbReference type="HAMAP" id="MF_00200">
    <property type="entry name" value="RTC"/>
    <property type="match status" value="1"/>
</dbReference>
<dbReference type="InterPro" id="IPR013791">
    <property type="entry name" value="RNA3'-term_phos_cycl_insert"/>
</dbReference>
<dbReference type="InterPro" id="IPR023797">
    <property type="entry name" value="RNA3'_phos_cyclase_dom"/>
</dbReference>
<dbReference type="InterPro" id="IPR037136">
    <property type="entry name" value="RNA3'_phos_cyclase_dom_sf"/>
</dbReference>
<dbReference type="InterPro" id="IPR000228">
    <property type="entry name" value="RNA3'_term_phos_cyc"/>
</dbReference>
<dbReference type="InterPro" id="IPR017770">
    <property type="entry name" value="RNA3'_term_phos_cyc_type_1"/>
</dbReference>
<dbReference type="InterPro" id="IPR020719">
    <property type="entry name" value="RNA3'_term_phos_cycl-like_CS"/>
</dbReference>
<dbReference type="InterPro" id="IPR013792">
    <property type="entry name" value="RNA3'P_cycl/enolpyr_Trfase_a/b"/>
</dbReference>
<dbReference type="InterPro" id="IPR036553">
    <property type="entry name" value="RPTC_insert"/>
</dbReference>
<dbReference type="NCBIfam" id="NF003246">
    <property type="entry name" value="PRK04204.1-2"/>
    <property type="match status" value="1"/>
</dbReference>
<dbReference type="NCBIfam" id="NF003247">
    <property type="entry name" value="PRK04204.1-3"/>
    <property type="match status" value="1"/>
</dbReference>
<dbReference type="NCBIfam" id="TIGR03399">
    <property type="entry name" value="RNA_3prim_cycl"/>
    <property type="match status" value="1"/>
</dbReference>
<dbReference type="PANTHER" id="PTHR11096">
    <property type="entry name" value="RNA 3' TERMINAL PHOSPHATE CYCLASE"/>
    <property type="match status" value="1"/>
</dbReference>
<dbReference type="PANTHER" id="PTHR11096:SF0">
    <property type="entry name" value="RNA 3'-TERMINAL PHOSPHATE CYCLASE"/>
    <property type="match status" value="1"/>
</dbReference>
<dbReference type="Pfam" id="PF01137">
    <property type="entry name" value="RTC"/>
    <property type="match status" value="1"/>
</dbReference>
<dbReference type="Pfam" id="PF05189">
    <property type="entry name" value="RTC_insert"/>
    <property type="match status" value="1"/>
</dbReference>
<dbReference type="PIRSF" id="PIRSF005378">
    <property type="entry name" value="RNA3'_term_phos_cycl_euk"/>
    <property type="match status" value="1"/>
</dbReference>
<dbReference type="SUPFAM" id="SSF55205">
    <property type="entry name" value="EPT/RTPC-like"/>
    <property type="match status" value="2"/>
</dbReference>
<dbReference type="SUPFAM" id="SSF52913">
    <property type="entry name" value="RNA 3'-terminal phosphate cyclase, RPTC, insert domain"/>
    <property type="match status" value="1"/>
</dbReference>
<dbReference type="PROSITE" id="PS01287">
    <property type="entry name" value="RTC"/>
    <property type="match status" value="1"/>
</dbReference>
<reference key="1">
    <citation type="journal article" date="2005" name="Nucleic Acids Res.">
        <title>Genome dynamics and diversity of Shigella species, the etiologic agents of bacillary dysentery.</title>
        <authorList>
            <person name="Yang F."/>
            <person name="Yang J."/>
            <person name="Zhang X."/>
            <person name="Chen L."/>
            <person name="Jiang Y."/>
            <person name="Yan Y."/>
            <person name="Tang X."/>
            <person name="Wang J."/>
            <person name="Xiong Z."/>
            <person name="Dong J."/>
            <person name="Xue Y."/>
            <person name="Zhu Y."/>
            <person name="Xu X."/>
            <person name="Sun L."/>
            <person name="Chen S."/>
            <person name="Nie H."/>
            <person name="Peng J."/>
            <person name="Xu J."/>
            <person name="Wang Y."/>
            <person name="Yuan Z."/>
            <person name="Wen Y."/>
            <person name="Yao Z."/>
            <person name="Shen Y."/>
            <person name="Qiang B."/>
            <person name="Hou Y."/>
            <person name="Yu J."/>
            <person name="Jin Q."/>
        </authorList>
    </citation>
    <scope>NUCLEOTIDE SEQUENCE [LARGE SCALE GENOMIC DNA]</scope>
    <source>
        <strain>Ss046</strain>
    </source>
</reference>
<organism>
    <name type="scientific">Shigella sonnei (strain Ss046)</name>
    <dbReference type="NCBI Taxonomy" id="300269"/>
    <lineage>
        <taxon>Bacteria</taxon>
        <taxon>Pseudomonadati</taxon>
        <taxon>Pseudomonadota</taxon>
        <taxon>Gammaproteobacteria</taxon>
        <taxon>Enterobacterales</taxon>
        <taxon>Enterobacteriaceae</taxon>
        <taxon>Shigella</taxon>
    </lineage>
</organism>
<gene>
    <name evidence="1" type="primary">rtcA</name>
    <name type="ordered locus">SSON_3551</name>
</gene>
<comment type="function">
    <text evidence="1">Catalyzes the conversion of 3'-phosphate to a 2',3'-cyclic phosphodiester at the end of RNA. The mechanism of action of the enzyme occurs in 3 steps: (A) adenylation of the enzyme by ATP; (B) transfer of adenylate to an RNA-N3'P to produce RNA-N3'PP5'A; (C) and attack of the adjacent 2'-hydroxyl on the 3'-phosphorus in the diester linkage to produce the cyclic end product. The biological role of this enzyme is unknown but it is likely to function in some aspects of cellular RNA processing.</text>
</comment>
<comment type="catalytic activity">
    <reaction evidence="1">
        <text>a 3'-end 3'-phospho-ribonucleotide-RNA + ATP = a 3'-end 2',3'-cyclophospho-ribonucleotide-RNA + AMP + diphosphate</text>
        <dbReference type="Rhea" id="RHEA:23976"/>
        <dbReference type="Rhea" id="RHEA-COMP:10463"/>
        <dbReference type="Rhea" id="RHEA-COMP:10464"/>
        <dbReference type="ChEBI" id="CHEBI:30616"/>
        <dbReference type="ChEBI" id="CHEBI:33019"/>
        <dbReference type="ChEBI" id="CHEBI:83062"/>
        <dbReference type="ChEBI" id="CHEBI:83064"/>
        <dbReference type="ChEBI" id="CHEBI:456215"/>
        <dbReference type="EC" id="6.5.1.4"/>
    </reaction>
</comment>
<comment type="subcellular location">
    <subcellularLocation>
        <location evidence="1">Cytoplasm</location>
    </subcellularLocation>
</comment>
<comment type="similarity">
    <text evidence="1">Belongs to the RNA 3'-terminal cyclase family. Type 1 subfamily.</text>
</comment>
<comment type="sequence caution" evidence="2">
    <conflict type="erroneous initiation">
        <sequence resource="EMBL-CDS" id="AAZ90106"/>
    </conflict>
</comment>
<feature type="chain" id="PRO_0000264800" description="RNA 3'-terminal phosphate cyclase">
    <location>
        <begin position="1"/>
        <end position="338"/>
    </location>
</feature>
<feature type="active site" description="Tele-AMP-histidine intermediate" evidence="1">
    <location>
        <position position="308"/>
    </location>
</feature>
<feature type="binding site" evidence="1">
    <location>
        <position position="103"/>
    </location>
    <ligand>
        <name>ATP</name>
        <dbReference type="ChEBI" id="CHEBI:30616"/>
    </ligand>
</feature>
<feature type="binding site" evidence="1">
    <location>
        <begin position="283"/>
        <end position="287"/>
    </location>
    <ligand>
        <name>ATP</name>
        <dbReference type="ChEBI" id="CHEBI:30616"/>
    </ligand>
</feature>
<keyword id="KW-0067">ATP-binding</keyword>
<keyword id="KW-0963">Cytoplasm</keyword>
<keyword id="KW-0436">Ligase</keyword>
<keyword id="KW-0547">Nucleotide-binding</keyword>
<keyword id="KW-1185">Reference proteome</keyword>
<accession>Q3YWK6</accession>
<evidence type="ECO:0000255" key="1">
    <source>
        <dbReference type="HAMAP-Rule" id="MF_00200"/>
    </source>
</evidence>
<evidence type="ECO:0000305" key="2"/>
<protein>
    <recommendedName>
        <fullName evidence="1">RNA 3'-terminal phosphate cyclase</fullName>
        <shortName evidence="1">RNA cyclase</shortName>
        <shortName evidence="1">RNA-3'-phosphate cyclase</shortName>
        <ecNumber evidence="1">6.5.1.4</ecNumber>
    </recommendedName>
</protein>